<reference key="1">
    <citation type="journal article" date="2013" name="Genome Announc.">
        <title>Draft genome sequence of the oxytetracycline-producing bacterium Streptomyces rimosus ATCC 10970.</title>
        <authorList>
            <person name="Pethick F.E."/>
            <person name="MacFadyen A.C."/>
            <person name="Tang Z."/>
            <person name="Sangal V."/>
            <person name="Liu T.-T."/>
            <person name="Chu J."/>
            <person name="Kosec G."/>
            <person name="Petkovic H."/>
            <person name="Guo M."/>
            <person name="Kirby R."/>
            <person name="Hoskisson P.A."/>
            <person name="Herron P.R."/>
            <person name="Hunter I.S."/>
        </authorList>
    </citation>
    <scope>NUCLEOTIDE SEQUENCE [LARGE SCALE GENOMIC DNA]</scope>
    <source>
        <strain>ATCC 10970 / DSM 40260 / JCM 4667 / NRRL 2234</strain>
    </source>
</reference>
<reference key="2">
    <citation type="journal article" date="2013" name="J. Am. Chem. Soc.">
        <title>Uncovering the enzymes that catalyze the final steps in oxytetracycline biosynthesis.</title>
        <authorList>
            <person name="Wang P."/>
            <person name="Bashiri G."/>
            <person name="Gao X."/>
            <person name="Sawaya M.R."/>
            <person name="Tang Y."/>
        </authorList>
    </citation>
    <scope>FUNCTION</scope>
    <scope>CATALYTIC ACTIVITY</scope>
    <scope>DISRUPTION PHENOTYPE</scope>
    <scope>SUBSTRATE SPECIFICITY</scope>
    <scope>PATHWAY</scope>
    <source>
        <strain>ATCC 10970 / DSM 40260 / JCM 4667 / NRRL 2234</strain>
    </source>
</reference>
<dbReference type="EC" id="1.3.98.4" evidence="1"/>
<dbReference type="EMBL" id="ANSJ01000024">
    <property type="protein sequence ID" value="ELQ83302.1"/>
    <property type="molecule type" value="Genomic_DNA"/>
</dbReference>
<dbReference type="RefSeq" id="WP_003981035.1">
    <property type="nucleotide sequence ID" value="NZ_CP048261.1"/>
</dbReference>
<dbReference type="SMR" id="L8EYU3"/>
<dbReference type="PATRIC" id="fig|1265868.3.peg.2255"/>
<dbReference type="BioCyc" id="MetaCyc:MONOMER-19944"/>
<dbReference type="UniPathway" id="UPA00926"/>
<dbReference type="GO" id="GO:0005829">
    <property type="term" value="C:cytosol"/>
    <property type="evidence" value="ECO:0007669"/>
    <property type="project" value="TreeGrafter"/>
</dbReference>
<dbReference type="GO" id="GO:0070967">
    <property type="term" value="F:coenzyme F420 binding"/>
    <property type="evidence" value="ECO:0007669"/>
    <property type="project" value="TreeGrafter"/>
</dbReference>
<dbReference type="GO" id="GO:0016627">
    <property type="term" value="F:oxidoreductase activity, acting on the CH-CH group of donors"/>
    <property type="evidence" value="ECO:0007669"/>
    <property type="project" value="TreeGrafter"/>
</dbReference>
<dbReference type="GO" id="GO:0017000">
    <property type="term" value="P:antibiotic biosynthetic process"/>
    <property type="evidence" value="ECO:0007669"/>
    <property type="project" value="UniProtKB-KW"/>
</dbReference>
<dbReference type="Gene3D" id="2.30.110.10">
    <property type="entry name" value="Electron Transport, Fmn-binding Protein, Chain A"/>
    <property type="match status" value="1"/>
</dbReference>
<dbReference type="InterPro" id="IPR052019">
    <property type="entry name" value="F420H2_bilvrd_red/Heme_oxyg"/>
</dbReference>
<dbReference type="InterPro" id="IPR024031">
    <property type="entry name" value="MSMEG_5819/OxyR"/>
</dbReference>
<dbReference type="InterPro" id="IPR011576">
    <property type="entry name" value="Pyridox_Oxase_N"/>
</dbReference>
<dbReference type="InterPro" id="IPR012349">
    <property type="entry name" value="Split_barrel_FMN-bd"/>
</dbReference>
<dbReference type="NCBIfam" id="TIGR04023">
    <property type="entry name" value="PPOX_MSMEG_5819"/>
    <property type="match status" value="1"/>
</dbReference>
<dbReference type="PANTHER" id="PTHR35176">
    <property type="entry name" value="HEME OXYGENASE HI_0854-RELATED"/>
    <property type="match status" value="1"/>
</dbReference>
<dbReference type="PANTHER" id="PTHR35176:SF6">
    <property type="entry name" value="HEME OXYGENASE HI_0854-RELATED"/>
    <property type="match status" value="1"/>
</dbReference>
<dbReference type="Pfam" id="PF01243">
    <property type="entry name" value="PNPOx_N"/>
    <property type="match status" value="1"/>
</dbReference>
<dbReference type="SUPFAM" id="SSF50475">
    <property type="entry name" value="FMN-binding split barrel"/>
    <property type="match status" value="1"/>
</dbReference>
<comment type="function">
    <text evidence="1">Involved in the biosynthesis of the antibiotics tetracycline and oxytetracycline. Catalyzes the C(5) reduction of 5a,11a-dehydrooxytetracycline to yield oxytetracycline as a major product. Also catalyzes the C(12) reduction of 5a,11a-dehydrotetracycline (12-dehydrotetracycline) to produce tetracycline as a minor product.</text>
</comment>
<comment type="catalytic activity">
    <reaction evidence="1">
        <text>tetracycline + oxidized coenzyme F420-(gamma-L-Glu)(n) + H(+) = 5a,11a-dehydrotetracycline + reduced coenzyme F420-(gamma-L-Glu)(n)</text>
        <dbReference type="Rhea" id="RHEA:50384"/>
        <dbReference type="Rhea" id="RHEA-COMP:12939"/>
        <dbReference type="Rhea" id="RHEA-COMP:14378"/>
        <dbReference type="ChEBI" id="CHEBI:15378"/>
        <dbReference type="ChEBI" id="CHEBI:57522"/>
        <dbReference type="ChEBI" id="CHEBI:77932"/>
        <dbReference type="ChEBI" id="CHEBI:133980"/>
        <dbReference type="ChEBI" id="CHEBI:139511"/>
        <dbReference type="EC" id="1.3.98.4"/>
    </reaction>
</comment>
<comment type="catalytic activity">
    <reaction evidence="1">
        <text>oxytetracycline + oxidized coenzyme F420-(gamma-L-Glu)(n) + H(+) = 5a,11a-dehydrooxytetracycline + reduced coenzyme F420-(gamma-L-Glu)(n)</text>
        <dbReference type="Rhea" id="RHEA:50392"/>
        <dbReference type="Rhea" id="RHEA-COMP:12939"/>
        <dbReference type="Rhea" id="RHEA-COMP:14378"/>
        <dbReference type="ChEBI" id="CHEBI:15378"/>
        <dbReference type="ChEBI" id="CHEBI:133011"/>
        <dbReference type="ChEBI" id="CHEBI:133012"/>
        <dbReference type="ChEBI" id="CHEBI:133980"/>
        <dbReference type="ChEBI" id="CHEBI:139511"/>
        <dbReference type="EC" id="1.3.98.4"/>
    </reaction>
</comment>
<comment type="pathway">
    <text evidence="4">Antibiotic biosynthesis; oxytetracycline biosynthesis.</text>
</comment>
<comment type="disruption phenotype">
    <text evidence="1">Cells lacking this gene are unable to produce oxytetracycline.</text>
</comment>
<comment type="similarity">
    <text evidence="3">Belongs to the pyridoxamine 5'-phosphate oxidase family.</text>
</comment>
<protein>
    <recommendedName>
        <fullName evidence="2">5a,11a-dehydrotetracycline/5a,11a-dehydrooxytetracycline reductase</fullName>
        <ecNumber evidence="1">1.3.98.4</ecNumber>
    </recommendedName>
    <alternativeName>
        <fullName evidence="3">12-dehydrotetracycline dehydrogenase</fullName>
    </alternativeName>
    <alternativeName>
        <fullName evidence="3">Dehydrooxytetracycline dehydrogenase</fullName>
    </alternativeName>
    <alternativeName>
        <fullName evidence="2">F420-dependent C5a-C11a reductase</fullName>
    </alternativeName>
</protein>
<name>OXYR_STRR1</name>
<sequence>MPFTQKEITYLRAQGYGRLATVGAHGEPHNVPVSFEIDEERGTIEITGRDMGRSRKFRNVAKNDRVAFVVDDVPCRDPEVVRAVVIHGTAQALPTGGRERRPHCADEMIRIHPRRIVTWGIEGDLSTGVHARDITAEDGGRR</sequence>
<accession>L8EYU3</accession>
<feature type="chain" id="PRO_0000443521" description="5a,11a-dehydrotetracycline/5a,11a-dehydrooxytetracycline reductase">
    <location>
        <begin position="1"/>
        <end position="142"/>
    </location>
</feature>
<organism>
    <name type="scientific">Streptomyces rimosus subsp. rimosus (strain ATCC 10970 / DSM 40260 / JCM 4667 / NRRL 2234)</name>
    <dbReference type="NCBI Taxonomy" id="1265868"/>
    <lineage>
        <taxon>Bacteria</taxon>
        <taxon>Bacillati</taxon>
        <taxon>Actinomycetota</taxon>
        <taxon>Actinomycetes</taxon>
        <taxon>Kitasatosporales</taxon>
        <taxon>Streptomycetaceae</taxon>
        <taxon>Streptomyces</taxon>
    </lineage>
</organism>
<gene>
    <name evidence="5" type="primary">oxyR</name>
    <name evidence="5" type="ORF">SRIM_10931</name>
</gene>
<evidence type="ECO:0000269" key="1">
    <source>
    </source>
</evidence>
<evidence type="ECO:0000303" key="2">
    <source>
    </source>
</evidence>
<evidence type="ECO:0000305" key="3"/>
<evidence type="ECO:0000305" key="4">
    <source>
    </source>
</evidence>
<evidence type="ECO:0000312" key="5">
    <source>
        <dbReference type="EMBL" id="ELQ83302.1"/>
    </source>
</evidence>
<proteinExistence type="evidence at protein level"/>
<keyword id="KW-0045">Antibiotic biosynthesis</keyword>
<keyword id="KW-0560">Oxidoreductase</keyword>